<dbReference type="EMBL" id="CP000970">
    <property type="protein sequence ID" value="ACB18796.1"/>
    <property type="molecule type" value="Genomic_DNA"/>
</dbReference>
<dbReference type="RefSeq" id="WP_000613955.1">
    <property type="nucleotide sequence ID" value="NC_010498.1"/>
</dbReference>
<dbReference type="SMR" id="B1LHC4"/>
<dbReference type="GeneID" id="93778677"/>
<dbReference type="KEGG" id="ecm:EcSMS35_3605"/>
<dbReference type="HOGENOM" id="CLU_095071_2_1_6"/>
<dbReference type="Proteomes" id="UP000007011">
    <property type="component" value="Chromosome"/>
</dbReference>
<dbReference type="GO" id="GO:0022625">
    <property type="term" value="C:cytosolic large ribosomal subunit"/>
    <property type="evidence" value="ECO:0007669"/>
    <property type="project" value="TreeGrafter"/>
</dbReference>
<dbReference type="GO" id="GO:0070180">
    <property type="term" value="F:large ribosomal subunit rRNA binding"/>
    <property type="evidence" value="ECO:0007669"/>
    <property type="project" value="TreeGrafter"/>
</dbReference>
<dbReference type="GO" id="GO:0003735">
    <property type="term" value="F:structural constituent of ribosome"/>
    <property type="evidence" value="ECO:0007669"/>
    <property type="project" value="InterPro"/>
</dbReference>
<dbReference type="GO" id="GO:0006412">
    <property type="term" value="P:translation"/>
    <property type="evidence" value="ECO:0007669"/>
    <property type="project" value="UniProtKB-UniRule"/>
</dbReference>
<dbReference type="CDD" id="cd00337">
    <property type="entry name" value="Ribosomal_uL14"/>
    <property type="match status" value="1"/>
</dbReference>
<dbReference type="FunFam" id="2.40.150.20:FF:000001">
    <property type="entry name" value="50S ribosomal protein L14"/>
    <property type="match status" value="1"/>
</dbReference>
<dbReference type="Gene3D" id="2.40.150.20">
    <property type="entry name" value="Ribosomal protein L14"/>
    <property type="match status" value="1"/>
</dbReference>
<dbReference type="HAMAP" id="MF_01367">
    <property type="entry name" value="Ribosomal_uL14"/>
    <property type="match status" value="1"/>
</dbReference>
<dbReference type="InterPro" id="IPR000218">
    <property type="entry name" value="Ribosomal_uL14"/>
</dbReference>
<dbReference type="InterPro" id="IPR005745">
    <property type="entry name" value="Ribosomal_uL14_bac-type"/>
</dbReference>
<dbReference type="InterPro" id="IPR019972">
    <property type="entry name" value="Ribosomal_uL14_CS"/>
</dbReference>
<dbReference type="InterPro" id="IPR036853">
    <property type="entry name" value="Ribosomal_uL14_sf"/>
</dbReference>
<dbReference type="NCBIfam" id="TIGR01067">
    <property type="entry name" value="rplN_bact"/>
    <property type="match status" value="1"/>
</dbReference>
<dbReference type="PANTHER" id="PTHR11761">
    <property type="entry name" value="50S/60S RIBOSOMAL PROTEIN L14/L23"/>
    <property type="match status" value="1"/>
</dbReference>
<dbReference type="PANTHER" id="PTHR11761:SF3">
    <property type="entry name" value="LARGE RIBOSOMAL SUBUNIT PROTEIN UL14M"/>
    <property type="match status" value="1"/>
</dbReference>
<dbReference type="Pfam" id="PF00238">
    <property type="entry name" value="Ribosomal_L14"/>
    <property type="match status" value="1"/>
</dbReference>
<dbReference type="SMART" id="SM01374">
    <property type="entry name" value="Ribosomal_L14"/>
    <property type="match status" value="1"/>
</dbReference>
<dbReference type="SUPFAM" id="SSF50193">
    <property type="entry name" value="Ribosomal protein L14"/>
    <property type="match status" value="1"/>
</dbReference>
<dbReference type="PROSITE" id="PS00049">
    <property type="entry name" value="RIBOSOMAL_L14"/>
    <property type="match status" value="1"/>
</dbReference>
<comment type="function">
    <text evidence="1">Binds to 23S rRNA. Forms part of two intersubunit bridges in the 70S ribosome.</text>
</comment>
<comment type="subunit">
    <text evidence="1">Part of the 50S ribosomal subunit. Forms a cluster with proteins L3 and L19. In the 70S ribosome, L14 and L19 interact and together make contacts with the 16S rRNA in bridges B5 and B8.</text>
</comment>
<comment type="similarity">
    <text evidence="1">Belongs to the universal ribosomal protein uL14 family.</text>
</comment>
<name>RL14_ECOSM</name>
<feature type="chain" id="PRO_1000144269" description="Large ribosomal subunit protein uL14">
    <location>
        <begin position="1"/>
        <end position="123"/>
    </location>
</feature>
<sequence>MIQEQTMLNVADNSGARRVMCIKVLGGSHRRYAGVGDIIKITIKEAIPRGKVKKGDVLKAVVVRTKKGVRRPDGSVIRFDGNACVLLNNNSEQPIGTRIFGPVTRELRSEKFMKIISLAPEVL</sequence>
<evidence type="ECO:0000255" key="1">
    <source>
        <dbReference type="HAMAP-Rule" id="MF_01367"/>
    </source>
</evidence>
<evidence type="ECO:0000305" key="2"/>
<proteinExistence type="inferred from homology"/>
<gene>
    <name evidence="1" type="primary">rplN</name>
    <name type="ordered locus">EcSMS35_3605</name>
</gene>
<protein>
    <recommendedName>
        <fullName evidence="1">Large ribosomal subunit protein uL14</fullName>
    </recommendedName>
    <alternativeName>
        <fullName evidence="2">50S ribosomal protein L14</fullName>
    </alternativeName>
</protein>
<accession>B1LHC4</accession>
<reference key="1">
    <citation type="journal article" date="2008" name="J. Bacteriol.">
        <title>Insights into the environmental resistance gene pool from the genome sequence of the multidrug-resistant environmental isolate Escherichia coli SMS-3-5.</title>
        <authorList>
            <person name="Fricke W.F."/>
            <person name="Wright M.S."/>
            <person name="Lindell A.H."/>
            <person name="Harkins D.M."/>
            <person name="Baker-Austin C."/>
            <person name="Ravel J."/>
            <person name="Stepanauskas R."/>
        </authorList>
    </citation>
    <scope>NUCLEOTIDE SEQUENCE [LARGE SCALE GENOMIC DNA]</scope>
    <source>
        <strain>SMS-3-5 / SECEC</strain>
    </source>
</reference>
<keyword id="KW-0687">Ribonucleoprotein</keyword>
<keyword id="KW-0689">Ribosomal protein</keyword>
<keyword id="KW-0694">RNA-binding</keyword>
<keyword id="KW-0699">rRNA-binding</keyword>
<organism>
    <name type="scientific">Escherichia coli (strain SMS-3-5 / SECEC)</name>
    <dbReference type="NCBI Taxonomy" id="439855"/>
    <lineage>
        <taxon>Bacteria</taxon>
        <taxon>Pseudomonadati</taxon>
        <taxon>Pseudomonadota</taxon>
        <taxon>Gammaproteobacteria</taxon>
        <taxon>Enterobacterales</taxon>
        <taxon>Enterobacteriaceae</taxon>
        <taxon>Escherichia</taxon>
    </lineage>
</organism>